<proteinExistence type="inferred from homology"/>
<sequence length="417" mass="44523">MLEQMGIAAKQASYKLAQLSSREKNRVLEKIADELEAQSESILNANAQDVADACANGLSEAMLDRLALTPARLKGIADDVRQVCNLADPVGQVIDGGVLDSGLRLERRRVPLGVIGVIYEARPNVTVDVASLCLKTGNAVILRGGKETCRTNAATVAVIQDALKSCGLPAGAVQAIDNPDRALVSEMLRMDKYIDMLIPRGGAGLHKLCREQSTIPVITGGIGVCHIYVDESAEIAEALKVIVNAKTQRPSTCNTVETLLVNKNIADSFLPALSKQMAESGVTLHADAAALAQLQAGPAKVVAVKAEEYDDEFLSLDLNVKIVSDLDDAIAHIREHGTQHSDAILTRDMRNAQRFVNEVDSSAVYVNASTRFTDGGQFGLGAEVAVSTQKLHARGPMGLEALTTYKWIGIGDYTIRA</sequence>
<gene>
    <name evidence="1" type="primary">proA</name>
    <name type="ordered locus">ECP_0272</name>
</gene>
<evidence type="ECO:0000255" key="1">
    <source>
        <dbReference type="HAMAP-Rule" id="MF_00412"/>
    </source>
</evidence>
<dbReference type="EC" id="1.2.1.41" evidence="1"/>
<dbReference type="EMBL" id="CP000247">
    <property type="protein sequence ID" value="ABG68308.1"/>
    <property type="molecule type" value="Genomic_DNA"/>
</dbReference>
<dbReference type="RefSeq" id="WP_000893298.1">
    <property type="nucleotide sequence ID" value="NC_008253.1"/>
</dbReference>
<dbReference type="SMR" id="Q0TL73"/>
<dbReference type="KEGG" id="ecp:ECP_0272"/>
<dbReference type="HOGENOM" id="CLU_030231_0_0_6"/>
<dbReference type="UniPathway" id="UPA00098">
    <property type="reaction ID" value="UER00360"/>
</dbReference>
<dbReference type="Proteomes" id="UP000009182">
    <property type="component" value="Chromosome"/>
</dbReference>
<dbReference type="GO" id="GO:0005737">
    <property type="term" value="C:cytoplasm"/>
    <property type="evidence" value="ECO:0007669"/>
    <property type="project" value="UniProtKB-SubCell"/>
</dbReference>
<dbReference type="GO" id="GO:0004350">
    <property type="term" value="F:glutamate-5-semialdehyde dehydrogenase activity"/>
    <property type="evidence" value="ECO:0007669"/>
    <property type="project" value="UniProtKB-UniRule"/>
</dbReference>
<dbReference type="GO" id="GO:0050661">
    <property type="term" value="F:NADP binding"/>
    <property type="evidence" value="ECO:0007669"/>
    <property type="project" value="InterPro"/>
</dbReference>
<dbReference type="GO" id="GO:0055129">
    <property type="term" value="P:L-proline biosynthetic process"/>
    <property type="evidence" value="ECO:0007669"/>
    <property type="project" value="UniProtKB-UniRule"/>
</dbReference>
<dbReference type="CDD" id="cd07079">
    <property type="entry name" value="ALDH_F18-19_ProA-GPR"/>
    <property type="match status" value="1"/>
</dbReference>
<dbReference type="FunFam" id="3.40.309.10:FF:000006">
    <property type="entry name" value="Gamma-glutamyl phosphate reductase"/>
    <property type="match status" value="1"/>
</dbReference>
<dbReference type="Gene3D" id="3.40.605.10">
    <property type="entry name" value="Aldehyde Dehydrogenase, Chain A, domain 1"/>
    <property type="match status" value="1"/>
</dbReference>
<dbReference type="Gene3D" id="3.40.309.10">
    <property type="entry name" value="Aldehyde Dehydrogenase, Chain A, domain 2"/>
    <property type="match status" value="1"/>
</dbReference>
<dbReference type="HAMAP" id="MF_00412">
    <property type="entry name" value="ProA"/>
    <property type="match status" value="1"/>
</dbReference>
<dbReference type="InterPro" id="IPR016161">
    <property type="entry name" value="Ald_DH/histidinol_DH"/>
</dbReference>
<dbReference type="InterPro" id="IPR016163">
    <property type="entry name" value="Ald_DH_C"/>
</dbReference>
<dbReference type="InterPro" id="IPR016162">
    <property type="entry name" value="Ald_DH_N"/>
</dbReference>
<dbReference type="InterPro" id="IPR015590">
    <property type="entry name" value="Aldehyde_DH_dom"/>
</dbReference>
<dbReference type="InterPro" id="IPR020593">
    <property type="entry name" value="G-glutamylP_reductase_CS"/>
</dbReference>
<dbReference type="InterPro" id="IPR012134">
    <property type="entry name" value="Glu-5-SA_DH"/>
</dbReference>
<dbReference type="InterPro" id="IPR000965">
    <property type="entry name" value="GPR_dom"/>
</dbReference>
<dbReference type="NCBIfam" id="NF001221">
    <property type="entry name" value="PRK00197.1"/>
    <property type="match status" value="1"/>
</dbReference>
<dbReference type="NCBIfam" id="TIGR00407">
    <property type="entry name" value="proA"/>
    <property type="match status" value="1"/>
</dbReference>
<dbReference type="PANTHER" id="PTHR11063:SF8">
    <property type="entry name" value="DELTA-1-PYRROLINE-5-CARBOXYLATE SYNTHASE"/>
    <property type="match status" value="1"/>
</dbReference>
<dbReference type="PANTHER" id="PTHR11063">
    <property type="entry name" value="GLUTAMATE SEMIALDEHYDE DEHYDROGENASE"/>
    <property type="match status" value="1"/>
</dbReference>
<dbReference type="Pfam" id="PF00171">
    <property type="entry name" value="Aldedh"/>
    <property type="match status" value="1"/>
</dbReference>
<dbReference type="PIRSF" id="PIRSF000151">
    <property type="entry name" value="GPR"/>
    <property type="match status" value="1"/>
</dbReference>
<dbReference type="SUPFAM" id="SSF53720">
    <property type="entry name" value="ALDH-like"/>
    <property type="match status" value="1"/>
</dbReference>
<dbReference type="PROSITE" id="PS01223">
    <property type="entry name" value="PROA"/>
    <property type="match status" value="1"/>
</dbReference>
<feature type="chain" id="PRO_0000252572" description="Gamma-glutamyl phosphate reductase">
    <location>
        <begin position="1"/>
        <end position="417"/>
    </location>
</feature>
<organism>
    <name type="scientific">Escherichia coli O6:K15:H31 (strain 536 / UPEC)</name>
    <dbReference type="NCBI Taxonomy" id="362663"/>
    <lineage>
        <taxon>Bacteria</taxon>
        <taxon>Pseudomonadati</taxon>
        <taxon>Pseudomonadota</taxon>
        <taxon>Gammaproteobacteria</taxon>
        <taxon>Enterobacterales</taxon>
        <taxon>Enterobacteriaceae</taxon>
        <taxon>Escherichia</taxon>
    </lineage>
</organism>
<comment type="function">
    <text evidence="1">Catalyzes the NADPH-dependent reduction of L-glutamate 5-phosphate into L-glutamate 5-semialdehyde and phosphate. The product spontaneously undergoes cyclization to form 1-pyrroline-5-carboxylate.</text>
</comment>
<comment type="catalytic activity">
    <reaction evidence="1">
        <text>L-glutamate 5-semialdehyde + phosphate + NADP(+) = L-glutamyl 5-phosphate + NADPH + H(+)</text>
        <dbReference type="Rhea" id="RHEA:19541"/>
        <dbReference type="ChEBI" id="CHEBI:15378"/>
        <dbReference type="ChEBI" id="CHEBI:43474"/>
        <dbReference type="ChEBI" id="CHEBI:57783"/>
        <dbReference type="ChEBI" id="CHEBI:58066"/>
        <dbReference type="ChEBI" id="CHEBI:58274"/>
        <dbReference type="ChEBI" id="CHEBI:58349"/>
        <dbReference type="EC" id="1.2.1.41"/>
    </reaction>
</comment>
<comment type="pathway">
    <text evidence="1">Amino-acid biosynthesis; L-proline biosynthesis; L-glutamate 5-semialdehyde from L-glutamate: step 2/2.</text>
</comment>
<comment type="subcellular location">
    <subcellularLocation>
        <location evidence="1">Cytoplasm</location>
    </subcellularLocation>
</comment>
<comment type="similarity">
    <text evidence="1">Belongs to the gamma-glutamyl phosphate reductase family.</text>
</comment>
<reference key="1">
    <citation type="journal article" date="2006" name="Mol. Microbiol.">
        <title>Role of pathogenicity island-associated integrases in the genome plasticity of uropathogenic Escherichia coli strain 536.</title>
        <authorList>
            <person name="Hochhut B."/>
            <person name="Wilde C."/>
            <person name="Balling G."/>
            <person name="Middendorf B."/>
            <person name="Dobrindt U."/>
            <person name="Brzuszkiewicz E."/>
            <person name="Gottschalk G."/>
            <person name="Carniel E."/>
            <person name="Hacker J."/>
        </authorList>
    </citation>
    <scope>NUCLEOTIDE SEQUENCE [LARGE SCALE GENOMIC DNA]</scope>
    <source>
        <strain>536 / UPEC</strain>
    </source>
</reference>
<name>PROA_ECOL5</name>
<keyword id="KW-0028">Amino-acid biosynthesis</keyword>
<keyword id="KW-0963">Cytoplasm</keyword>
<keyword id="KW-0521">NADP</keyword>
<keyword id="KW-0560">Oxidoreductase</keyword>
<keyword id="KW-0641">Proline biosynthesis</keyword>
<protein>
    <recommendedName>
        <fullName evidence="1">Gamma-glutamyl phosphate reductase</fullName>
        <shortName evidence="1">GPR</shortName>
        <ecNumber evidence="1">1.2.1.41</ecNumber>
    </recommendedName>
    <alternativeName>
        <fullName evidence="1">Glutamate-5-semialdehyde dehydrogenase</fullName>
    </alternativeName>
    <alternativeName>
        <fullName evidence="1">Glutamyl-gamma-semialdehyde dehydrogenase</fullName>
        <shortName evidence="1">GSA dehydrogenase</shortName>
    </alternativeName>
</protein>
<accession>Q0TL73</accession>